<dbReference type="EC" id="2.7.8.13" evidence="1"/>
<dbReference type="EMBL" id="AE017223">
    <property type="protein sequence ID" value="AAX74759.1"/>
    <property type="molecule type" value="Genomic_DNA"/>
</dbReference>
<dbReference type="RefSeq" id="WP_002964542.1">
    <property type="nucleotide sequence ID" value="NC_006932.1"/>
</dbReference>
<dbReference type="SMR" id="Q57C75"/>
<dbReference type="EnsemblBacteria" id="AAX74759">
    <property type="protein sequence ID" value="AAX74759"/>
    <property type="gene ID" value="BruAb1_1429"/>
</dbReference>
<dbReference type="GeneID" id="93016268"/>
<dbReference type="KEGG" id="bmb:BruAb1_1429"/>
<dbReference type="HOGENOM" id="CLU_023982_0_0_5"/>
<dbReference type="UniPathway" id="UPA00219"/>
<dbReference type="Proteomes" id="UP000000540">
    <property type="component" value="Chromosome I"/>
</dbReference>
<dbReference type="GO" id="GO:0005886">
    <property type="term" value="C:plasma membrane"/>
    <property type="evidence" value="ECO:0007669"/>
    <property type="project" value="UniProtKB-SubCell"/>
</dbReference>
<dbReference type="GO" id="GO:0046872">
    <property type="term" value="F:metal ion binding"/>
    <property type="evidence" value="ECO:0007669"/>
    <property type="project" value="UniProtKB-KW"/>
</dbReference>
<dbReference type="GO" id="GO:0008963">
    <property type="term" value="F:phospho-N-acetylmuramoyl-pentapeptide-transferase activity"/>
    <property type="evidence" value="ECO:0007669"/>
    <property type="project" value="UniProtKB-UniRule"/>
</dbReference>
<dbReference type="GO" id="GO:0051992">
    <property type="term" value="F:UDP-N-acetylmuramoyl-L-alanyl-D-glutamyl-meso-2,6-diaminopimelyl-D-alanyl-D-alanine:undecaprenyl-phosphate transferase activity"/>
    <property type="evidence" value="ECO:0007669"/>
    <property type="project" value="RHEA"/>
</dbReference>
<dbReference type="GO" id="GO:0051301">
    <property type="term" value="P:cell division"/>
    <property type="evidence" value="ECO:0007669"/>
    <property type="project" value="UniProtKB-KW"/>
</dbReference>
<dbReference type="GO" id="GO:0071555">
    <property type="term" value="P:cell wall organization"/>
    <property type="evidence" value="ECO:0007669"/>
    <property type="project" value="UniProtKB-KW"/>
</dbReference>
<dbReference type="GO" id="GO:0009252">
    <property type="term" value="P:peptidoglycan biosynthetic process"/>
    <property type="evidence" value="ECO:0007669"/>
    <property type="project" value="UniProtKB-UniRule"/>
</dbReference>
<dbReference type="GO" id="GO:0008360">
    <property type="term" value="P:regulation of cell shape"/>
    <property type="evidence" value="ECO:0007669"/>
    <property type="project" value="UniProtKB-KW"/>
</dbReference>
<dbReference type="CDD" id="cd06852">
    <property type="entry name" value="GT_MraY"/>
    <property type="match status" value="1"/>
</dbReference>
<dbReference type="HAMAP" id="MF_00038">
    <property type="entry name" value="MraY"/>
    <property type="match status" value="1"/>
</dbReference>
<dbReference type="InterPro" id="IPR000715">
    <property type="entry name" value="Glycosyl_transferase_4"/>
</dbReference>
<dbReference type="InterPro" id="IPR003524">
    <property type="entry name" value="PNAcMuramoyl-5peptid_Trfase"/>
</dbReference>
<dbReference type="InterPro" id="IPR018480">
    <property type="entry name" value="PNAcMuramoyl-5peptid_Trfase_CS"/>
</dbReference>
<dbReference type="NCBIfam" id="TIGR00445">
    <property type="entry name" value="mraY"/>
    <property type="match status" value="1"/>
</dbReference>
<dbReference type="PANTHER" id="PTHR22926">
    <property type="entry name" value="PHOSPHO-N-ACETYLMURAMOYL-PENTAPEPTIDE-TRANSFERASE"/>
    <property type="match status" value="1"/>
</dbReference>
<dbReference type="PANTHER" id="PTHR22926:SF5">
    <property type="entry name" value="PHOSPHO-N-ACETYLMURAMOYL-PENTAPEPTIDE-TRANSFERASE HOMOLOG"/>
    <property type="match status" value="1"/>
</dbReference>
<dbReference type="Pfam" id="PF00953">
    <property type="entry name" value="Glycos_transf_4"/>
    <property type="match status" value="1"/>
</dbReference>
<dbReference type="Pfam" id="PF10555">
    <property type="entry name" value="MraY_sig1"/>
    <property type="match status" value="1"/>
</dbReference>
<dbReference type="PROSITE" id="PS01347">
    <property type="entry name" value="MRAY_1"/>
    <property type="match status" value="1"/>
</dbReference>
<dbReference type="PROSITE" id="PS01348">
    <property type="entry name" value="MRAY_2"/>
    <property type="match status" value="1"/>
</dbReference>
<comment type="function">
    <text evidence="1">Catalyzes the initial step of the lipid cycle reactions in the biosynthesis of the cell wall peptidoglycan: transfers peptidoglycan precursor phospho-MurNAc-pentapeptide from UDP-MurNAc-pentapeptide onto the lipid carrier undecaprenyl phosphate, yielding undecaprenyl-pyrophosphoryl-MurNAc-pentapeptide, known as lipid I.</text>
</comment>
<comment type="catalytic activity">
    <reaction evidence="1">
        <text>UDP-N-acetyl-alpha-D-muramoyl-L-alanyl-gamma-D-glutamyl-meso-2,6-diaminopimeloyl-D-alanyl-D-alanine + di-trans,octa-cis-undecaprenyl phosphate = di-trans,octa-cis-undecaprenyl diphospho-N-acetyl-alpha-D-muramoyl-L-alanyl-D-glutamyl-meso-2,6-diaminopimeloyl-D-alanyl-D-alanine + UMP</text>
        <dbReference type="Rhea" id="RHEA:28386"/>
        <dbReference type="ChEBI" id="CHEBI:57865"/>
        <dbReference type="ChEBI" id="CHEBI:60392"/>
        <dbReference type="ChEBI" id="CHEBI:61386"/>
        <dbReference type="ChEBI" id="CHEBI:61387"/>
        <dbReference type="EC" id="2.7.8.13"/>
    </reaction>
</comment>
<comment type="cofactor">
    <cofactor evidence="1">
        <name>Mg(2+)</name>
        <dbReference type="ChEBI" id="CHEBI:18420"/>
    </cofactor>
</comment>
<comment type="pathway">
    <text evidence="1">Cell wall biogenesis; peptidoglycan biosynthesis.</text>
</comment>
<comment type="subcellular location">
    <subcellularLocation>
        <location evidence="1">Cell inner membrane</location>
        <topology evidence="1">Multi-pass membrane protein</topology>
    </subcellularLocation>
</comment>
<comment type="similarity">
    <text evidence="1">Belongs to the glycosyltransferase 4 family. MraY subfamily.</text>
</comment>
<accession>Q57C75</accession>
<proteinExistence type="inferred from homology"/>
<organism>
    <name type="scientific">Brucella abortus biovar 1 (strain 9-941)</name>
    <dbReference type="NCBI Taxonomy" id="262698"/>
    <lineage>
        <taxon>Bacteria</taxon>
        <taxon>Pseudomonadati</taxon>
        <taxon>Pseudomonadota</taxon>
        <taxon>Alphaproteobacteria</taxon>
        <taxon>Hyphomicrobiales</taxon>
        <taxon>Brucellaceae</taxon>
        <taxon>Brucella/Ochrobactrum group</taxon>
        <taxon>Brucella</taxon>
    </lineage>
</organism>
<gene>
    <name evidence="1" type="primary">mraY</name>
    <name type="ordered locus">BruAb1_1429</name>
</gene>
<protein>
    <recommendedName>
        <fullName evidence="1">Phospho-N-acetylmuramoyl-pentapeptide-transferase</fullName>
        <ecNumber evidence="1">2.7.8.13</ecNumber>
    </recommendedName>
    <alternativeName>
        <fullName evidence="1">UDP-MurNAc-pentapeptide phosphotransferase</fullName>
    </alternativeName>
</protein>
<keyword id="KW-0131">Cell cycle</keyword>
<keyword id="KW-0132">Cell division</keyword>
<keyword id="KW-0997">Cell inner membrane</keyword>
<keyword id="KW-1003">Cell membrane</keyword>
<keyword id="KW-0133">Cell shape</keyword>
<keyword id="KW-0961">Cell wall biogenesis/degradation</keyword>
<keyword id="KW-0460">Magnesium</keyword>
<keyword id="KW-0472">Membrane</keyword>
<keyword id="KW-0479">Metal-binding</keyword>
<keyword id="KW-0573">Peptidoglycan synthesis</keyword>
<keyword id="KW-0808">Transferase</keyword>
<keyword id="KW-0812">Transmembrane</keyword>
<keyword id="KW-1133">Transmembrane helix</keyword>
<feature type="chain" id="PRO_0000235439" description="Phospho-N-acetylmuramoyl-pentapeptide-transferase">
    <location>
        <begin position="1"/>
        <end position="360"/>
    </location>
</feature>
<feature type="transmembrane region" description="Helical" evidence="1">
    <location>
        <begin position="27"/>
        <end position="47"/>
    </location>
</feature>
<feature type="transmembrane region" description="Helical" evidence="1">
    <location>
        <begin position="71"/>
        <end position="91"/>
    </location>
</feature>
<feature type="transmembrane region" description="Helical" evidence="1">
    <location>
        <begin position="93"/>
        <end position="113"/>
    </location>
</feature>
<feature type="transmembrane region" description="Helical" evidence="1">
    <location>
        <begin position="128"/>
        <end position="148"/>
    </location>
</feature>
<feature type="transmembrane region" description="Helical" evidence="1">
    <location>
        <begin position="168"/>
        <end position="188"/>
    </location>
</feature>
<feature type="transmembrane region" description="Helical" evidence="1">
    <location>
        <begin position="199"/>
        <end position="219"/>
    </location>
</feature>
<feature type="transmembrane region" description="Helical" evidence="1">
    <location>
        <begin position="239"/>
        <end position="259"/>
    </location>
</feature>
<feature type="transmembrane region" description="Helical" evidence="1">
    <location>
        <begin position="262"/>
        <end position="282"/>
    </location>
</feature>
<feature type="transmembrane region" description="Helical" evidence="1">
    <location>
        <begin position="288"/>
        <end position="308"/>
    </location>
</feature>
<feature type="transmembrane region" description="Helical" evidence="1">
    <location>
        <begin position="337"/>
        <end position="357"/>
    </location>
</feature>
<name>MRAY_BRUAB</name>
<evidence type="ECO:0000255" key="1">
    <source>
        <dbReference type="HAMAP-Rule" id="MF_00038"/>
    </source>
</evidence>
<sequence length="360" mass="38745">MLMFLTHFAEHVTPFNVFRYITFRTGGAMITSALIVFLFGPTIINSLRVRQGKGQPIRADGPQTHFKKAGTPTMGGLMIMTGILASCLLWANLASVYVWVVLMVSVGFGAIGFYDDYLKVTKQSDKGFSGKARLGIEFLIAAIAAFTIMRAGQEPFSSSLTFPFVKQLVINLSWFFIPFAAFVMVGAGNAVNLTDGLDGLAIVPVMVAAASFGFIAYLSGNAIFADYLQIHFVPGTGELAVVLGAVIGAGLGFLWFNAPPAAIFMGDTGSLALGGMLGTVAVATKHEIVLAIIGGLFVMEALSVIIQVGFFKMTGRRVFLMAPIHHHFEKKGWTESQVVIRFWIVAIILAMIGLSTLKLR</sequence>
<reference key="1">
    <citation type="journal article" date="2005" name="J. Bacteriol.">
        <title>Completion of the genome sequence of Brucella abortus and comparison to the highly similar genomes of Brucella melitensis and Brucella suis.</title>
        <authorList>
            <person name="Halling S.M."/>
            <person name="Peterson-Burch B.D."/>
            <person name="Bricker B.J."/>
            <person name="Zuerner R.L."/>
            <person name="Qing Z."/>
            <person name="Li L.-L."/>
            <person name="Kapur V."/>
            <person name="Alt D.P."/>
            <person name="Olsen S.C."/>
        </authorList>
    </citation>
    <scope>NUCLEOTIDE SEQUENCE [LARGE SCALE GENOMIC DNA]</scope>
    <source>
        <strain>9-941</strain>
    </source>
</reference>